<sequence>MGELTAFLLPLIIVLMVKHSNSRTHSLRYFRLGVSDPIHGVPEFISVGYVDSHPITTYDSVTQQKEPRAPWMAENLAPDHWERYTQLLRGWQQMFKVELKRLQRHYNHSGSHTYQRMIGCELLEDGSTTGFLQYAYDGQDFLIFNKDTLSWLAVDNVAHTIKRAWEANQHELQYQKNWLEEECIAWLKRFLEYGKDTLQRTEPPLVRVNRKETFPGVTTLFCKAHGFYPPEIYMTWMKNGEEIVQEMDYGDILPSGDGTYQTWASVELDPQSSNLYSCHVEHCGVHVVLQVPQESEAIPLVMKAVSGSIVFVIVLAGVGVLVWRRRPREQNGAVYLPTPD</sequence>
<gene>
    <name evidence="3" type="primary">MR1</name>
</gene>
<evidence type="ECO:0000250" key="1"/>
<evidence type="ECO:0000250" key="2">
    <source>
        <dbReference type="UniProtKB" id="C1ITJ8"/>
    </source>
</evidence>
<evidence type="ECO:0000250" key="3">
    <source>
        <dbReference type="UniProtKB" id="Q95460"/>
    </source>
</evidence>
<evidence type="ECO:0000255" key="4"/>
<evidence type="ECO:0000255" key="5">
    <source>
        <dbReference type="PROSITE-ProRule" id="PRU00114"/>
    </source>
</evidence>
<evidence type="ECO:0000305" key="6"/>
<feature type="signal peptide" evidence="4">
    <location>
        <begin position="1"/>
        <end position="22"/>
    </location>
</feature>
<feature type="chain" id="PRO_0000344444" description="Major histocompatibility complex class I-related protein 1">
    <location>
        <begin position="23"/>
        <end position="340"/>
    </location>
</feature>
<feature type="topological domain" description="Extracellular" evidence="4">
    <location>
        <begin position="23"/>
        <end position="302"/>
    </location>
</feature>
<feature type="transmembrane region" description="Helical" evidence="4">
    <location>
        <begin position="303"/>
        <end position="323"/>
    </location>
</feature>
<feature type="topological domain" description="Cytoplasmic" evidence="4">
    <location>
        <begin position="324"/>
        <end position="340"/>
    </location>
</feature>
<feature type="domain" description="Ig-like C1-type" evidence="5">
    <location>
        <begin position="203"/>
        <end position="282"/>
    </location>
</feature>
<feature type="region of interest" description="Antigen-binding cleft" evidence="3">
    <location>
        <begin position="23"/>
        <end position="201"/>
    </location>
</feature>
<feature type="region of interest" description="Alpha-1" evidence="4">
    <location>
        <begin position="23"/>
        <end position="109"/>
    </location>
</feature>
<feature type="region of interest" description="Alpha-2" evidence="4">
    <location>
        <begin position="110"/>
        <end position="201"/>
    </location>
</feature>
<feature type="region of interest" description="Alpha-3" evidence="4">
    <location>
        <begin position="202"/>
        <end position="293"/>
    </location>
</feature>
<feature type="region of interest" description="Connecting peptide" evidence="4">
    <location>
        <begin position="294"/>
        <end position="302"/>
    </location>
</feature>
<feature type="binding site" evidence="3">
    <location>
        <position position="29"/>
    </location>
    <ligand>
        <name>8-(9H-purin-6-yl)-2-oxa-8-azabicyclo[3.3.1]nona-3,6-diene-4,6-dicarbaldehyde</name>
        <dbReference type="ChEBI" id="CHEBI:233180"/>
    </ligand>
</feature>
<feature type="binding site" evidence="3">
    <location>
        <position position="31"/>
    </location>
    <ligand>
        <name>5-(2-oxoethylideneamino)-6-(D-ribitylamino)uracil</name>
        <dbReference type="ChEBI" id="CHEBI:78397"/>
        <note>pathogen-derived metabolite antigen</note>
    </ligand>
</feature>
<feature type="binding site" evidence="3">
    <location>
        <position position="31"/>
    </location>
    <ligand>
        <name>5-(2-oxopropylideneamino)-6-(D-ribitylamino)uracil</name>
        <dbReference type="ChEBI" id="CHEBI:78398"/>
        <note>pathogen-derived metabolite antigen</note>
    </ligand>
</feature>
<feature type="binding site" evidence="3">
    <location>
        <position position="31"/>
    </location>
    <ligand>
        <name>7-hydroxy-6-methyl-8-(1-D-ribityl)lumazine</name>
        <dbReference type="ChEBI" id="CHEBI:233481"/>
        <note>pathogen-derived metabolite antigen</note>
    </ligand>
</feature>
<feature type="binding site" evidence="3">
    <location>
        <position position="31"/>
    </location>
    <ligand>
        <name>8-(9H-purin-6-yl)-2-oxa-8-azabicyclo[3.3.1]nona-3,6-diene-4,6-dicarbaldehyde</name>
        <dbReference type="ChEBI" id="CHEBI:233180"/>
    </ligand>
</feature>
<feature type="binding site" evidence="3">
    <location>
        <position position="46"/>
    </location>
    <ligand>
        <name>5-(2-oxoethylideneamino)-6-(D-ribitylamino)uracil</name>
        <dbReference type="ChEBI" id="CHEBI:78397"/>
        <note>pathogen-derived metabolite antigen</note>
    </ligand>
</feature>
<feature type="binding site" evidence="3">
    <location>
        <position position="46"/>
    </location>
    <ligand>
        <name>5-(2-oxopropylideneamino)-6-(D-ribitylamino)uracil</name>
        <dbReference type="ChEBI" id="CHEBI:78398"/>
        <note>pathogen-derived metabolite antigen</note>
    </ligand>
</feature>
<feature type="binding site" evidence="3">
    <location>
        <position position="46"/>
    </location>
    <ligand>
        <name>7-hydroxy-6-methyl-8-(1-D-ribityl)lumazine</name>
        <dbReference type="ChEBI" id="CHEBI:233481"/>
        <note>pathogen-derived metabolite antigen</note>
    </ligand>
</feature>
<feature type="binding site" description="covalent" evidence="3">
    <location>
        <position position="65"/>
    </location>
    <ligand>
        <name>2-amino-4-oxopteridine-6-carbaldehyde</name>
        <dbReference type="ChEBI" id="CHEBI:70981"/>
    </ligand>
</feature>
<feature type="binding site" description="covalent" evidence="3">
    <location>
        <position position="65"/>
    </location>
    <ligand>
        <name>5-(2-oxoethylideneamino)-6-(D-ribitylamino)uracil</name>
        <dbReference type="ChEBI" id="CHEBI:78397"/>
        <note>pathogen-derived metabolite antigen</note>
    </ligand>
</feature>
<feature type="binding site" description="covalent" evidence="3">
    <location>
        <position position="65"/>
    </location>
    <ligand>
        <name>5-(2-oxopropylideneamino)-6-(D-ribitylamino)uracil</name>
        <dbReference type="ChEBI" id="CHEBI:78398"/>
        <note>pathogen-derived metabolite antigen</note>
    </ligand>
</feature>
<feature type="binding site" evidence="3">
    <location>
        <position position="65"/>
    </location>
    <ligand>
        <name>7-hydroxy-6-methyl-8-(1-D-ribityl)lumazine</name>
        <dbReference type="ChEBI" id="CHEBI:233481"/>
        <note>pathogen-derived metabolite antigen</note>
    </ligand>
</feature>
<feature type="binding site" description="covalent" evidence="3">
    <location>
        <position position="65"/>
    </location>
    <ligand>
        <name>8-(9H-purin-6-yl)-2-oxa-8-azabicyclo[3.3.1]nona-3,6-diene-4,6-dicarbaldehyde</name>
        <dbReference type="ChEBI" id="CHEBI:233180"/>
    </ligand>
</feature>
<feature type="binding site" description="covalent" evidence="3">
    <location>
        <position position="65"/>
    </location>
    <ligand>
        <name>pyridoxal</name>
        <dbReference type="ChEBI" id="CHEBI:17310"/>
    </ligand>
</feature>
<feature type="binding site" evidence="3">
    <location>
        <position position="80"/>
    </location>
    <ligand>
        <name>8-(9H-purin-6-yl)-2-oxa-8-azabicyclo[3.3.1]nona-3,6-diene-4,6-dicarbaldehyde</name>
        <dbReference type="ChEBI" id="CHEBI:233180"/>
    </ligand>
</feature>
<feature type="binding site" evidence="3">
    <location>
        <position position="116"/>
    </location>
    <ligand>
        <name>5-(2-oxoethylideneamino)-6-(D-ribitylamino)uracil</name>
        <dbReference type="ChEBI" id="CHEBI:78397"/>
        <note>pathogen-derived metabolite antigen</note>
    </ligand>
</feature>
<feature type="binding site" evidence="3">
    <location>
        <position position="116"/>
    </location>
    <ligand>
        <name>5-(2-oxopropylideneamino)-6-(D-ribitylamino)uracil</name>
        <dbReference type="ChEBI" id="CHEBI:78398"/>
        <note>pathogen-derived metabolite antigen</note>
    </ligand>
</feature>
<feature type="binding site" evidence="3">
    <location>
        <position position="116"/>
    </location>
    <ligand>
        <name>7-hydroxy-6-methyl-8-(1-D-ribityl)lumazine</name>
        <dbReference type="ChEBI" id="CHEBI:233481"/>
        <note>pathogen-derived metabolite antigen</note>
    </ligand>
</feature>
<feature type="binding site" evidence="3">
    <location>
        <position position="116"/>
    </location>
    <ligand>
        <name>8-(9H-purin-6-yl)-2-oxa-8-azabicyclo[3.3.1]nona-3,6-diene-4,6-dicarbaldehyde</name>
        <dbReference type="ChEBI" id="CHEBI:233180"/>
    </ligand>
</feature>
<feature type="binding site" evidence="3">
    <location>
        <position position="174"/>
    </location>
    <ligand>
        <name>5-(2-oxoethylideneamino)-6-(D-ribitylamino)uracil</name>
        <dbReference type="ChEBI" id="CHEBI:78397"/>
        <note>pathogen-derived metabolite antigen</note>
    </ligand>
</feature>
<feature type="binding site" evidence="3">
    <location>
        <position position="174"/>
    </location>
    <ligand>
        <name>5-(2-oxopropylideneamino)-6-(D-ribitylamino)uracil</name>
        <dbReference type="ChEBI" id="CHEBI:78398"/>
        <note>pathogen-derived metabolite antigen</note>
    </ligand>
</feature>
<feature type="binding site" evidence="3">
    <location>
        <position position="174"/>
    </location>
    <ligand>
        <name>7-hydroxy-6-methyl-8-(1-D-ribityl)lumazine</name>
        <dbReference type="ChEBI" id="CHEBI:233481"/>
        <note>pathogen-derived metabolite antigen</note>
    </ligand>
</feature>
<feature type="binding site" evidence="3">
    <location>
        <position position="175"/>
    </location>
    <ligand>
        <name>5-(2-oxoethylideneamino)-6-(D-ribitylamino)uracil</name>
        <dbReference type="ChEBI" id="CHEBI:78397"/>
        <note>pathogen-derived metabolite antigen</note>
    </ligand>
</feature>
<feature type="binding site" evidence="3">
    <location>
        <position position="175"/>
    </location>
    <ligand>
        <name>5-(2-oxopropylideneamino)-6-(D-ribitylamino)uracil</name>
        <dbReference type="ChEBI" id="CHEBI:78398"/>
        <note>pathogen-derived metabolite antigen</note>
    </ligand>
</feature>
<feature type="binding site" evidence="3">
    <location>
        <position position="175"/>
    </location>
    <ligand>
        <name>7-hydroxy-6-methyl-8-(1-D-ribityl)lumazine</name>
        <dbReference type="ChEBI" id="CHEBI:233481"/>
        <note>pathogen-derived metabolite antigen</note>
    </ligand>
</feature>
<feature type="glycosylation site" description="N-linked (GlcNAc...) asparagine" evidence="4">
    <location>
        <position position="107"/>
    </location>
</feature>
<feature type="disulfide bond" evidence="5">
    <location>
        <begin position="120"/>
        <end position="183"/>
    </location>
</feature>
<feature type="disulfide bond" evidence="5">
    <location>
        <begin position="222"/>
        <end position="278"/>
    </location>
</feature>
<accession>Q5RD09</accession>
<protein>
    <recommendedName>
        <fullName>Major histocompatibility complex class I-related protein 1</fullName>
        <shortName>MHC class I-related protein 1</shortName>
    </recommendedName>
</protein>
<name>HMR1_PONAB</name>
<keyword id="KW-1003">Cell membrane</keyword>
<keyword id="KW-1015">Disulfide bond</keyword>
<keyword id="KW-0256">Endoplasmic reticulum</keyword>
<keyword id="KW-0967">Endosome</keyword>
<keyword id="KW-0325">Glycoprotein</keyword>
<keyword id="KW-0333">Golgi apparatus</keyword>
<keyword id="KW-0391">Immunity</keyword>
<keyword id="KW-0393">Immunoglobulin domain</keyword>
<keyword id="KW-0399">Innate immunity</keyword>
<keyword id="KW-0472">Membrane</keyword>
<keyword id="KW-0490">MHC I</keyword>
<keyword id="KW-1185">Reference proteome</keyword>
<keyword id="KW-0732">Signal</keyword>
<keyword id="KW-0812">Transmembrane</keyword>
<keyword id="KW-1133">Transmembrane helix</keyword>
<dbReference type="EMBL" id="CR858109">
    <property type="protein sequence ID" value="CAH90348.1"/>
    <property type="molecule type" value="mRNA"/>
</dbReference>
<dbReference type="RefSeq" id="NP_001125167.1">
    <property type="nucleotide sequence ID" value="NM_001131695.1"/>
</dbReference>
<dbReference type="RefSeq" id="XP_024100876.1">
    <property type="nucleotide sequence ID" value="XM_024245108.3"/>
</dbReference>
<dbReference type="SMR" id="Q5RD09"/>
<dbReference type="FunCoup" id="Q5RD09">
    <property type="interactions" value="505"/>
</dbReference>
<dbReference type="STRING" id="9601.ENSPPYP00000000505"/>
<dbReference type="GlyCosmos" id="Q5RD09">
    <property type="glycosylation" value="1 site, No reported glycans"/>
</dbReference>
<dbReference type="Ensembl" id="ENSPPYT00000040292.1">
    <property type="protein sequence ID" value="ENSPPYP00000026393.1"/>
    <property type="gene ID" value="ENSPPYG00000000445.3"/>
</dbReference>
<dbReference type="GeneID" id="100172054"/>
<dbReference type="KEGG" id="pon:100172054"/>
<dbReference type="CTD" id="3140"/>
<dbReference type="eggNOG" id="ENOG502RQEK">
    <property type="taxonomic scope" value="Eukaryota"/>
</dbReference>
<dbReference type="GeneTree" id="ENSGT01120000271826"/>
<dbReference type="HOGENOM" id="CLU_047501_0_1_1"/>
<dbReference type="InParanoid" id="Q5RD09"/>
<dbReference type="OrthoDB" id="8936120at2759"/>
<dbReference type="TreeFam" id="TF336617"/>
<dbReference type="Proteomes" id="UP000001595">
    <property type="component" value="Chromosome 1"/>
</dbReference>
<dbReference type="GO" id="GO:0005783">
    <property type="term" value="C:endoplasmic reticulum"/>
    <property type="evidence" value="ECO:0007669"/>
    <property type="project" value="UniProtKB-SubCell"/>
</dbReference>
<dbReference type="GO" id="GO:0009897">
    <property type="term" value="C:external side of plasma membrane"/>
    <property type="evidence" value="ECO:0007669"/>
    <property type="project" value="TreeGrafter"/>
</dbReference>
<dbReference type="GO" id="GO:0005615">
    <property type="term" value="C:extracellular space"/>
    <property type="evidence" value="ECO:0007669"/>
    <property type="project" value="TreeGrafter"/>
</dbReference>
<dbReference type="GO" id="GO:0042612">
    <property type="term" value="C:MHC class I protein complex"/>
    <property type="evidence" value="ECO:0007669"/>
    <property type="project" value="UniProtKB-KW"/>
</dbReference>
<dbReference type="GO" id="GO:0002474">
    <property type="term" value="P:antigen processing and presentation of peptide antigen via MHC class I"/>
    <property type="evidence" value="ECO:0007669"/>
    <property type="project" value="UniProtKB-KW"/>
</dbReference>
<dbReference type="GO" id="GO:0045087">
    <property type="term" value="P:innate immune response"/>
    <property type="evidence" value="ECO:0007669"/>
    <property type="project" value="UniProtKB-KW"/>
</dbReference>
<dbReference type="CDD" id="cd07698">
    <property type="entry name" value="IgC1_MHC_I_alpha3"/>
    <property type="match status" value="1"/>
</dbReference>
<dbReference type="FunFam" id="3.30.500.10:FF:000001">
    <property type="entry name" value="H-2 class I histocompatibility antigen, alpha chain"/>
    <property type="match status" value="1"/>
</dbReference>
<dbReference type="FunFam" id="2.60.40.10:FF:000204">
    <property type="entry name" value="Major histocompatibility complex, class I-related protein"/>
    <property type="match status" value="1"/>
</dbReference>
<dbReference type="Gene3D" id="2.60.40.10">
    <property type="entry name" value="Immunoglobulins"/>
    <property type="match status" value="1"/>
</dbReference>
<dbReference type="Gene3D" id="3.30.500.10">
    <property type="entry name" value="MHC class I-like antigen recognition-like"/>
    <property type="match status" value="1"/>
</dbReference>
<dbReference type="InterPro" id="IPR007110">
    <property type="entry name" value="Ig-like_dom"/>
</dbReference>
<dbReference type="InterPro" id="IPR036179">
    <property type="entry name" value="Ig-like_dom_sf"/>
</dbReference>
<dbReference type="InterPro" id="IPR013783">
    <property type="entry name" value="Ig-like_fold"/>
</dbReference>
<dbReference type="InterPro" id="IPR003006">
    <property type="entry name" value="Ig/MHC_CS"/>
</dbReference>
<dbReference type="InterPro" id="IPR003597">
    <property type="entry name" value="Ig_C1-set"/>
</dbReference>
<dbReference type="InterPro" id="IPR050208">
    <property type="entry name" value="MHC_class-I_related"/>
</dbReference>
<dbReference type="InterPro" id="IPR011161">
    <property type="entry name" value="MHC_I-like_Ag-recog"/>
</dbReference>
<dbReference type="InterPro" id="IPR037055">
    <property type="entry name" value="MHC_I-like_Ag-recog_sf"/>
</dbReference>
<dbReference type="InterPro" id="IPR011162">
    <property type="entry name" value="MHC_I/II-like_Ag-recog"/>
</dbReference>
<dbReference type="InterPro" id="IPR001039">
    <property type="entry name" value="MHC_I_a_a1/a2"/>
</dbReference>
<dbReference type="PANTHER" id="PTHR16675:SF242">
    <property type="entry name" value="MAJOR HISTOCOMPATIBILITY COMPLEX CLASS I-RELATED GENE PROTEIN"/>
    <property type="match status" value="1"/>
</dbReference>
<dbReference type="PANTHER" id="PTHR16675">
    <property type="entry name" value="MHC CLASS I-RELATED"/>
    <property type="match status" value="1"/>
</dbReference>
<dbReference type="Pfam" id="PF07654">
    <property type="entry name" value="C1-set"/>
    <property type="match status" value="1"/>
</dbReference>
<dbReference type="Pfam" id="PF00129">
    <property type="entry name" value="MHC_I"/>
    <property type="match status" value="1"/>
</dbReference>
<dbReference type="PRINTS" id="PR01638">
    <property type="entry name" value="MHCCLASSI"/>
</dbReference>
<dbReference type="SMART" id="SM00407">
    <property type="entry name" value="IGc1"/>
    <property type="match status" value="1"/>
</dbReference>
<dbReference type="SUPFAM" id="SSF48726">
    <property type="entry name" value="Immunoglobulin"/>
    <property type="match status" value="1"/>
</dbReference>
<dbReference type="SUPFAM" id="SSF54452">
    <property type="entry name" value="MHC antigen-recognition domain"/>
    <property type="match status" value="1"/>
</dbReference>
<dbReference type="PROSITE" id="PS50835">
    <property type="entry name" value="IG_LIKE"/>
    <property type="match status" value="1"/>
</dbReference>
<dbReference type="PROSITE" id="PS00290">
    <property type="entry name" value="IG_MHC"/>
    <property type="match status" value="1"/>
</dbReference>
<comment type="function">
    <text evidence="3">Antigen-presenting molecule specialized in displaying microbial pyrimidine-based metabolites to alpha-beta T cell receptors (TCR) on innate-type mucosal-associated invariant T (MAIT) cells. In complex with B2M preferentially presents riboflavin-derived metabolites to semi-invariant TCRs on MAIT cells, guiding immune surveillance of the microbial metabolome at mucosal epithelial barriers. Signature pyrimidine-based microbial antigens are generated via non-enzymatic condensation of metabolite intermediates of the riboflavin pathway with by-products arising from other metabolic pathways such as glycolysis. Typical potent antigenic metabolites are 5-(2-oxoethylideneamino)-6-D-ribitylaminouracil (5-OE-RU) and 5-(2-oxopropylideneamino)-6-D-ribitylaminouracil (5-OP-RU), products of condensation of 5-amino-6-D-ribityaminouracil (5-A-RU) with glyoxal or methylglyoxal by-products, respectively. May present microbial antigens to various MAIT cell subsets, providing for unique recognition of diverse microbes, including pathogens that do not synthesize riboflavin. Upon antigen recognition, elicits rapid innate-type MAIT cell activation to eliminate pathogenic microbes by directly killing infected cells. During T cell development, drives thymic selection and post-thymic terminal differentiation of MAIT cells in a process dependent on commensal microflora. Acts as an immune sensor of cancer cell metabolome. May present a tumor-specific or -associated metabolite essential for cancer cell survival to a pan-cancer TCR on a non-MAIT CD8-positive T cell clone, triggering T cell-mediated killing of a wide range of cancer cell types. May present tumor-enriched pyridoxal and pyridoxal 5'-phosphate antigens, enabling preferential recognition of cancer cells. Presents nucleobase carbonyl adducts generated during oxidative stress. Captures M3Ade, a nucleobase adduct composed of one adenine modified by a malondialdehyde trimer, for recognition by MR1-restricted T cell clones expressing a polyclonal TCR repertoire.</text>
</comment>
<comment type="subunit">
    <text evidence="2 3">Heterotrimer that consists of MR1, B2M and metabolite antigen. Major classes of metabolite ligands presented by MR1 include riboflavin-related antigens, pyrimidines and ribityl lumazines, nucleobase adducts and folate derivatives. Forms reversible covalent Schiff base complexes with microbial pyrimidine-based metabolite, which serves as a molecular switch triggering complete folding, stable association with B2M and translocation of the ternary complex from endoplasmic reticulum to the plasma membrane. Alternatively, forms non-Schiff base complexes with ribityl lumazines. On antigen-presenting cells, the ternary complex interacts with TCR on MR1-restricted T cells. Interacts with TAPBP and TAPBPL chaperones in the endoplasmic reticulum. TAPBP associated or not with MHC class I peptide loading complex binds ligand-free MR1 or MR1-B2M complex, providing for stable MR1 pools ready for metabolite antigen processing. TAPBPL interacts with MR1 in a ligand-independent way; this interaction may stabilize MR1 pool and facilitate ligand loading and dissociation. Structurally, MR1-B2M heterodimer adopts a topology similar to classical MHC class I molecules, with alpha-1 and alpha-2 domains of MR1 forming the antigen-binding cleft composed of two alpha-helices resting on a floor of 7-stranded anti-parallel beta-pleated sheet (By similarity). MR1-B2M heterodimer (via alpha-helices) interacts with TCR (via CDR domains) (By similarity).</text>
</comment>
<comment type="subcellular location">
    <subcellularLocation>
        <location evidence="2">Cell membrane</location>
        <topology evidence="3">Single-pass type I membrane protein</topology>
    </subcellularLocation>
    <subcellularLocation>
        <location evidence="3">Endoplasmic reticulum membrane</location>
        <topology evidence="4">Single-pass type I membrane protein</topology>
    </subcellularLocation>
    <subcellularLocation>
        <location evidence="3">Golgi apparatus membrane</location>
        <topology evidence="4">Single-pass type I membrane protein</topology>
    </subcellularLocation>
    <subcellularLocation>
        <location evidence="3">Early endosome membrane</location>
        <topology evidence="4">Single-pass type I membrane protein</topology>
    </subcellularLocation>
    <subcellularLocation>
        <location evidence="3">Late endosome membrane</location>
        <topology evidence="4">Single-pass type I membrane protein</topology>
    </subcellularLocation>
    <text evidence="3">In the absence of antigen remains within the endoplasmic reticulum where it acts as a metabolite sensor. Antigen binding triggers trafficking of the ternary complex to the plasma membrane. After presentation, most of these complexes are rapidly internalized and degraded via endocytosis. A small subset recycles via endosomes back to the plasma membrane and may thus acquire and present new antigens that do not efficiently reach the endoplasmic reticulum.</text>
</comment>
<comment type="domain">
    <text evidence="3">The alpha-1 domain is a structural part of antigen-binding cleft.</text>
</comment>
<comment type="domain">
    <text evidence="3">The alpha-2 domain is a structural part of antigen-binding cleft.</text>
</comment>
<comment type="PTM">
    <text evidence="1">N-glycosylated.</text>
</comment>
<comment type="similarity">
    <text evidence="6">Belongs to the MHC class I family.</text>
</comment>
<proteinExistence type="evidence at transcript level"/>
<reference key="1">
    <citation type="submission" date="2004-11" db="EMBL/GenBank/DDBJ databases">
        <authorList>
            <consortium name="The German cDNA consortium"/>
        </authorList>
    </citation>
    <scope>NUCLEOTIDE SEQUENCE [LARGE SCALE MRNA]</scope>
    <source>
        <tissue>Heart</tissue>
    </source>
</reference>
<organism>
    <name type="scientific">Pongo abelii</name>
    <name type="common">Sumatran orangutan</name>
    <name type="synonym">Pongo pygmaeus abelii</name>
    <dbReference type="NCBI Taxonomy" id="9601"/>
    <lineage>
        <taxon>Eukaryota</taxon>
        <taxon>Metazoa</taxon>
        <taxon>Chordata</taxon>
        <taxon>Craniata</taxon>
        <taxon>Vertebrata</taxon>
        <taxon>Euteleostomi</taxon>
        <taxon>Mammalia</taxon>
        <taxon>Eutheria</taxon>
        <taxon>Euarchontoglires</taxon>
        <taxon>Primates</taxon>
        <taxon>Haplorrhini</taxon>
        <taxon>Catarrhini</taxon>
        <taxon>Hominidae</taxon>
        <taxon>Pongo</taxon>
    </lineage>
</organism>